<proteinExistence type="evidence at protein level"/>
<accession>Q8R411</accession>
<accession>Q3UQ11</accession>
<accession>Q8C6M8</accession>
<accession>Q9D182</accession>
<gene>
    <name type="primary">Myct1</name>
    <name type="synonym">Mtmc1</name>
</gene>
<comment type="function">
    <text evidence="2">May regulate certain MYC target genes, MYC seems to be a direct upstream transcriptional activator. Does not seem to significantly affect growth cell capacity. Overexpression seems to mediate many of the known phenotypic features associated with MYC, including promotion of apoptosis, alteration of morphology, enhancement of anchorage-independent growth, tumorigenic conversion, promotion of genomic instability and inhibition of hematopoietic differentiation.</text>
</comment>
<comment type="subcellular location">
    <subcellularLocation>
        <location evidence="3">Nucleus membrane</location>
        <topology evidence="3">Single-pass membrane protein</topology>
    </subcellularLocation>
</comment>
<comment type="tissue specificity">
    <text evidence="2">Highly expressed in lung, heart, and skeletal muscle. Expressed in brain, eye, liver, kidney, smooth muscle, pancreas, thyroid, thymus, submaxillary gland, spleen, testis, ovary, prostate, epididymis, and uterus. Deregulated expression promotes apoptosis in response to growth factor deprivation. Overexpression in synergy with CCNB1 may promote genomic instability.</text>
</comment>
<comment type="developmental stage">
    <text evidence="2">Low levels of expression seen in 7-, 11-, 15- and 17-day embryos.</text>
</comment>
<comment type="similarity">
    <text evidence="3">Belongs to the MYCT1 family.</text>
</comment>
<comment type="sequence caution" evidence="3">
    <conflict type="erroneous initiation">
        <sequence resource="EMBL-CDS" id="BAC35696"/>
    </conflict>
</comment>
<comment type="sequence caution" evidence="3">
    <conflict type="frameshift">
        <sequence resource="EMBL-CDS" id="BAE25233"/>
    </conflict>
</comment>
<organism>
    <name type="scientific">Mus musculus</name>
    <name type="common">Mouse</name>
    <dbReference type="NCBI Taxonomy" id="10090"/>
    <lineage>
        <taxon>Eukaryota</taxon>
        <taxon>Metazoa</taxon>
        <taxon>Chordata</taxon>
        <taxon>Craniata</taxon>
        <taxon>Vertebrata</taxon>
        <taxon>Euteleostomi</taxon>
        <taxon>Mammalia</taxon>
        <taxon>Eutheria</taxon>
        <taxon>Euarchontoglires</taxon>
        <taxon>Glires</taxon>
        <taxon>Rodentia</taxon>
        <taxon>Myomorpha</taxon>
        <taxon>Muroidea</taxon>
        <taxon>Muridae</taxon>
        <taxon>Murinae</taxon>
        <taxon>Mus</taxon>
        <taxon>Mus</taxon>
    </lineage>
</organism>
<evidence type="ECO:0000255" key="1"/>
<evidence type="ECO:0000269" key="2">
    <source>
    </source>
</evidence>
<evidence type="ECO:0000305" key="3"/>
<evidence type="ECO:0007744" key="4">
    <source>
    </source>
</evidence>
<evidence type="ECO:0007744" key="5">
    <source>
    </source>
</evidence>
<reference key="1">
    <citation type="journal article" date="2002" name="J. Biol. Chem.">
        <title>Myc target in myeloid cells-1, a novel c-Myc target, recapitulates multiple c-Myc phenotypes.</title>
        <authorList>
            <person name="Yin X."/>
            <person name="Grove L."/>
            <person name="Rogulski K."/>
            <person name="Prochownik E.V."/>
        </authorList>
    </citation>
    <scope>NUCLEOTIDE SEQUENCE [MRNA]</scope>
    <scope>FUNCTION</scope>
    <scope>SUBCELLULAR LOCATION</scope>
    <scope>TISSUE SPECIFICITY</scope>
    <scope>DEVELOPMENTAL STAGE</scope>
</reference>
<reference key="2">
    <citation type="journal article" date="2005" name="Science">
        <title>The transcriptional landscape of the mammalian genome.</title>
        <authorList>
            <person name="Carninci P."/>
            <person name="Kasukawa T."/>
            <person name="Katayama S."/>
            <person name="Gough J."/>
            <person name="Frith M.C."/>
            <person name="Maeda N."/>
            <person name="Oyama R."/>
            <person name="Ravasi T."/>
            <person name="Lenhard B."/>
            <person name="Wells C."/>
            <person name="Kodzius R."/>
            <person name="Shimokawa K."/>
            <person name="Bajic V.B."/>
            <person name="Brenner S.E."/>
            <person name="Batalov S."/>
            <person name="Forrest A.R."/>
            <person name="Zavolan M."/>
            <person name="Davis M.J."/>
            <person name="Wilming L.G."/>
            <person name="Aidinis V."/>
            <person name="Allen J.E."/>
            <person name="Ambesi-Impiombato A."/>
            <person name="Apweiler R."/>
            <person name="Aturaliya R.N."/>
            <person name="Bailey T.L."/>
            <person name="Bansal M."/>
            <person name="Baxter L."/>
            <person name="Beisel K.W."/>
            <person name="Bersano T."/>
            <person name="Bono H."/>
            <person name="Chalk A.M."/>
            <person name="Chiu K.P."/>
            <person name="Choudhary V."/>
            <person name="Christoffels A."/>
            <person name="Clutterbuck D.R."/>
            <person name="Crowe M.L."/>
            <person name="Dalla E."/>
            <person name="Dalrymple B.P."/>
            <person name="de Bono B."/>
            <person name="Della Gatta G."/>
            <person name="di Bernardo D."/>
            <person name="Down T."/>
            <person name="Engstrom P."/>
            <person name="Fagiolini M."/>
            <person name="Faulkner G."/>
            <person name="Fletcher C.F."/>
            <person name="Fukushima T."/>
            <person name="Furuno M."/>
            <person name="Futaki S."/>
            <person name="Gariboldi M."/>
            <person name="Georgii-Hemming P."/>
            <person name="Gingeras T.R."/>
            <person name="Gojobori T."/>
            <person name="Green R.E."/>
            <person name="Gustincich S."/>
            <person name="Harbers M."/>
            <person name="Hayashi Y."/>
            <person name="Hensch T.K."/>
            <person name="Hirokawa N."/>
            <person name="Hill D."/>
            <person name="Huminiecki L."/>
            <person name="Iacono M."/>
            <person name="Ikeo K."/>
            <person name="Iwama A."/>
            <person name="Ishikawa T."/>
            <person name="Jakt M."/>
            <person name="Kanapin A."/>
            <person name="Katoh M."/>
            <person name="Kawasawa Y."/>
            <person name="Kelso J."/>
            <person name="Kitamura H."/>
            <person name="Kitano H."/>
            <person name="Kollias G."/>
            <person name="Krishnan S.P."/>
            <person name="Kruger A."/>
            <person name="Kummerfeld S.K."/>
            <person name="Kurochkin I.V."/>
            <person name="Lareau L.F."/>
            <person name="Lazarevic D."/>
            <person name="Lipovich L."/>
            <person name="Liu J."/>
            <person name="Liuni S."/>
            <person name="McWilliam S."/>
            <person name="Madan Babu M."/>
            <person name="Madera M."/>
            <person name="Marchionni L."/>
            <person name="Matsuda H."/>
            <person name="Matsuzawa S."/>
            <person name="Miki H."/>
            <person name="Mignone F."/>
            <person name="Miyake S."/>
            <person name="Morris K."/>
            <person name="Mottagui-Tabar S."/>
            <person name="Mulder N."/>
            <person name="Nakano N."/>
            <person name="Nakauchi H."/>
            <person name="Ng P."/>
            <person name="Nilsson R."/>
            <person name="Nishiguchi S."/>
            <person name="Nishikawa S."/>
            <person name="Nori F."/>
            <person name="Ohara O."/>
            <person name="Okazaki Y."/>
            <person name="Orlando V."/>
            <person name="Pang K.C."/>
            <person name="Pavan W.J."/>
            <person name="Pavesi G."/>
            <person name="Pesole G."/>
            <person name="Petrovsky N."/>
            <person name="Piazza S."/>
            <person name="Reed J."/>
            <person name="Reid J.F."/>
            <person name="Ring B.Z."/>
            <person name="Ringwald M."/>
            <person name="Rost B."/>
            <person name="Ruan Y."/>
            <person name="Salzberg S.L."/>
            <person name="Sandelin A."/>
            <person name="Schneider C."/>
            <person name="Schoenbach C."/>
            <person name="Sekiguchi K."/>
            <person name="Semple C.A."/>
            <person name="Seno S."/>
            <person name="Sessa L."/>
            <person name="Sheng Y."/>
            <person name="Shibata Y."/>
            <person name="Shimada H."/>
            <person name="Shimada K."/>
            <person name="Silva D."/>
            <person name="Sinclair B."/>
            <person name="Sperling S."/>
            <person name="Stupka E."/>
            <person name="Sugiura K."/>
            <person name="Sultana R."/>
            <person name="Takenaka Y."/>
            <person name="Taki K."/>
            <person name="Tammoja K."/>
            <person name="Tan S.L."/>
            <person name="Tang S."/>
            <person name="Taylor M.S."/>
            <person name="Tegner J."/>
            <person name="Teichmann S.A."/>
            <person name="Ueda H.R."/>
            <person name="van Nimwegen E."/>
            <person name="Verardo R."/>
            <person name="Wei C.L."/>
            <person name="Yagi K."/>
            <person name="Yamanishi H."/>
            <person name="Zabarovsky E."/>
            <person name="Zhu S."/>
            <person name="Zimmer A."/>
            <person name="Hide W."/>
            <person name="Bult C."/>
            <person name="Grimmond S.M."/>
            <person name="Teasdale R.D."/>
            <person name="Liu E.T."/>
            <person name="Brusic V."/>
            <person name="Quackenbush J."/>
            <person name="Wahlestedt C."/>
            <person name="Mattick J.S."/>
            <person name="Hume D.A."/>
            <person name="Kai C."/>
            <person name="Sasaki D."/>
            <person name="Tomaru Y."/>
            <person name="Fukuda S."/>
            <person name="Kanamori-Katayama M."/>
            <person name="Suzuki M."/>
            <person name="Aoki J."/>
            <person name="Arakawa T."/>
            <person name="Iida J."/>
            <person name="Imamura K."/>
            <person name="Itoh M."/>
            <person name="Kato T."/>
            <person name="Kawaji H."/>
            <person name="Kawagashira N."/>
            <person name="Kawashima T."/>
            <person name="Kojima M."/>
            <person name="Kondo S."/>
            <person name="Konno H."/>
            <person name="Nakano K."/>
            <person name="Ninomiya N."/>
            <person name="Nishio T."/>
            <person name="Okada M."/>
            <person name="Plessy C."/>
            <person name="Shibata K."/>
            <person name="Shiraki T."/>
            <person name="Suzuki S."/>
            <person name="Tagami M."/>
            <person name="Waki K."/>
            <person name="Watahiki A."/>
            <person name="Okamura-Oho Y."/>
            <person name="Suzuki H."/>
            <person name="Kawai J."/>
            <person name="Hayashizaki Y."/>
        </authorList>
    </citation>
    <scope>NUCLEOTIDE SEQUENCE [LARGE SCALE MRNA]</scope>
    <source>
        <strain>C57BL/6J</strain>
        <tissue>Embryo</tissue>
        <tissue>Head</tissue>
        <tissue>Lung</tissue>
        <tissue>Oviduct</tissue>
    </source>
</reference>
<reference key="3">
    <citation type="journal article" date="2004" name="Genome Res.">
        <title>The status, quality, and expansion of the NIH full-length cDNA project: the Mammalian Gene Collection (MGC).</title>
        <authorList>
            <consortium name="The MGC Project Team"/>
        </authorList>
    </citation>
    <scope>NUCLEOTIDE SEQUENCE [LARGE SCALE MRNA]</scope>
    <source>
        <strain>C57BL/6J</strain>
        <tissue>Mammary gland</tissue>
    </source>
</reference>
<reference key="4">
    <citation type="journal article" date="2007" name="Proc. Natl. Acad. Sci. U.S.A.">
        <title>Large-scale phosphorylation analysis of mouse liver.</title>
        <authorList>
            <person name="Villen J."/>
            <person name="Beausoleil S.A."/>
            <person name="Gerber S.A."/>
            <person name="Gygi S.P."/>
        </authorList>
    </citation>
    <scope>PHOSPHORYLATION [LARGE SCALE ANALYSIS] AT SER-87</scope>
    <scope>IDENTIFICATION BY MASS SPECTROMETRY [LARGE SCALE ANALYSIS]</scope>
    <source>
        <tissue>Liver</tissue>
    </source>
</reference>
<reference key="5">
    <citation type="journal article" date="2010" name="Cell">
        <title>A tissue-specific atlas of mouse protein phosphorylation and expression.</title>
        <authorList>
            <person name="Huttlin E.L."/>
            <person name="Jedrychowski M.P."/>
            <person name="Elias J.E."/>
            <person name="Goswami T."/>
            <person name="Rad R."/>
            <person name="Beausoleil S.A."/>
            <person name="Villen J."/>
            <person name="Haas W."/>
            <person name="Sowa M.E."/>
            <person name="Gygi S.P."/>
        </authorList>
    </citation>
    <scope>PHOSPHORYLATION [LARGE SCALE ANALYSIS] AT SER-87; SER-90; SER-93 AND SER-101</scope>
    <scope>IDENTIFICATION BY MASS SPECTROMETRY [LARGE SCALE ANALYSIS]</scope>
    <source>
        <tissue>Brown adipose tissue</tissue>
        <tissue>Heart</tissue>
        <tissue>Kidney</tissue>
        <tissue>Liver</tissue>
        <tissue>Lung</tissue>
        <tissue>Pancreas</tissue>
        <tissue>Spleen</tissue>
    </source>
</reference>
<protein>
    <recommendedName>
        <fullName>Myc target protein 1</fullName>
    </recommendedName>
    <alternativeName>
        <fullName>Myc target in myeloid cells protein 1</fullName>
    </alternativeName>
</protein>
<dbReference type="EMBL" id="AY090114">
    <property type="protein sequence ID" value="AAM14631.1"/>
    <property type="molecule type" value="mRNA"/>
</dbReference>
<dbReference type="EMBL" id="AK030706">
    <property type="protein sequence ID" value="BAE20454.1"/>
    <property type="molecule type" value="mRNA"/>
</dbReference>
<dbReference type="EMBL" id="AK003845">
    <property type="protein sequence ID" value="BAB23032.1"/>
    <property type="molecule type" value="mRNA"/>
</dbReference>
<dbReference type="EMBL" id="AK054222">
    <property type="protein sequence ID" value="BAC35696.1"/>
    <property type="status" value="ALT_INIT"/>
    <property type="molecule type" value="mRNA"/>
</dbReference>
<dbReference type="EMBL" id="AK142963">
    <property type="protein sequence ID" value="BAE25233.1"/>
    <property type="status" value="ALT_FRAME"/>
    <property type="molecule type" value="mRNA"/>
</dbReference>
<dbReference type="EMBL" id="AF499468">
    <property type="protein sequence ID" value="AAM22183.1"/>
    <property type="molecule type" value="Genomic_DNA"/>
</dbReference>
<dbReference type="EMBL" id="BC096559">
    <property type="protein sequence ID" value="AAH96559.1"/>
    <property type="molecule type" value="mRNA"/>
</dbReference>
<dbReference type="CCDS" id="CCDS56681.1"/>
<dbReference type="RefSeq" id="NP_081069.1">
    <property type="nucleotide sequence ID" value="NM_026793.2"/>
</dbReference>
<dbReference type="BioGRID" id="212964">
    <property type="interactions" value="1"/>
</dbReference>
<dbReference type="FunCoup" id="Q8R411">
    <property type="interactions" value="1762"/>
</dbReference>
<dbReference type="STRING" id="10090.ENSMUSP00000050430"/>
<dbReference type="iPTMnet" id="Q8R411"/>
<dbReference type="PhosphoSitePlus" id="Q8R411"/>
<dbReference type="PaxDb" id="10090-ENSMUSP00000050430"/>
<dbReference type="ProteomicsDB" id="287650"/>
<dbReference type="Antibodypedia" id="55356">
    <property type="antibodies" value="127 antibodies from 23 providers"/>
</dbReference>
<dbReference type="Ensembl" id="ENSMUST00000051809.10">
    <property type="protein sequence ID" value="ENSMUSP00000050430.9"/>
    <property type="gene ID" value="ENSMUSG00000046916.10"/>
</dbReference>
<dbReference type="GeneID" id="68632"/>
<dbReference type="KEGG" id="mmu:68632"/>
<dbReference type="UCSC" id="uc007egl.2">
    <property type="organism name" value="mouse"/>
</dbReference>
<dbReference type="AGR" id="MGI:1915882"/>
<dbReference type="CTD" id="80177"/>
<dbReference type="MGI" id="MGI:1915882">
    <property type="gene designation" value="Myct1"/>
</dbReference>
<dbReference type="VEuPathDB" id="HostDB:ENSMUSG00000046916"/>
<dbReference type="eggNOG" id="ENOG502RXWU">
    <property type="taxonomic scope" value="Eukaryota"/>
</dbReference>
<dbReference type="GeneTree" id="ENSGT00390000011642"/>
<dbReference type="HOGENOM" id="CLU_104680_0_0_1"/>
<dbReference type="InParanoid" id="Q8R411"/>
<dbReference type="OMA" id="SFWGNNG"/>
<dbReference type="OrthoDB" id="9943706at2759"/>
<dbReference type="PhylomeDB" id="Q8R411"/>
<dbReference type="TreeFam" id="TF333196"/>
<dbReference type="BioGRID-ORCS" id="68632">
    <property type="hits" value="1 hit in 77 CRISPR screens"/>
</dbReference>
<dbReference type="ChiTaRS" id="Myct1">
    <property type="organism name" value="mouse"/>
</dbReference>
<dbReference type="PRO" id="PR:Q8R411"/>
<dbReference type="Proteomes" id="UP000000589">
    <property type="component" value="Chromosome 10"/>
</dbReference>
<dbReference type="RNAct" id="Q8R411">
    <property type="molecule type" value="protein"/>
</dbReference>
<dbReference type="Bgee" id="ENSMUSG00000046916">
    <property type="expression patterns" value="Expressed in lumbar dorsal root ganglion and 167 other cell types or tissues"/>
</dbReference>
<dbReference type="GO" id="GO:0016604">
    <property type="term" value="C:nuclear body"/>
    <property type="evidence" value="ECO:0007669"/>
    <property type="project" value="Ensembl"/>
</dbReference>
<dbReference type="GO" id="GO:0031965">
    <property type="term" value="C:nuclear membrane"/>
    <property type="evidence" value="ECO:0007669"/>
    <property type="project" value="UniProtKB-SubCell"/>
</dbReference>
<dbReference type="GO" id="GO:0061484">
    <property type="term" value="P:hematopoietic stem cell homeostasis"/>
    <property type="evidence" value="ECO:0000315"/>
    <property type="project" value="MGI"/>
</dbReference>
<dbReference type="InterPro" id="IPR029180">
    <property type="entry name" value="Myc_target_1"/>
</dbReference>
<dbReference type="PANTHER" id="PTHR14869">
    <property type="entry name" value="MYC TARGET PROTEIN 1"/>
    <property type="match status" value="1"/>
</dbReference>
<dbReference type="PANTHER" id="PTHR14869:SF0">
    <property type="entry name" value="MYC TARGET PROTEIN 1"/>
    <property type="match status" value="1"/>
</dbReference>
<dbReference type="Pfam" id="PF15179">
    <property type="entry name" value="Myc_target_1"/>
    <property type="match status" value="1"/>
</dbReference>
<sequence>MANNTTSLGSPWPENFWEDLIMSFTVSVAIGLAIGGFLWALFVFLSRRRRASAPISQWSPTRRPRSSYNHGLNRTGFYRHSGYERRSNLSLASLTFQRQASMELVNSFPRKSSFRASTFHPFLQCPPLPVETESQLMTLSASTTPSTLSTAHSPSRPDFRWSSNSLRMGLSTPPPPAYESIIKAFPDS</sequence>
<keyword id="KW-0472">Membrane</keyword>
<keyword id="KW-0539">Nucleus</keyword>
<keyword id="KW-0597">Phosphoprotein</keyword>
<keyword id="KW-1185">Reference proteome</keyword>
<keyword id="KW-0812">Transmembrane</keyword>
<keyword id="KW-1133">Transmembrane helix</keyword>
<name>MYCT1_MOUSE</name>
<feature type="chain" id="PRO_0000310960" description="Myc target protein 1">
    <location>
        <begin position="1"/>
        <end position="188"/>
    </location>
</feature>
<feature type="transmembrane region" description="Helical" evidence="1">
    <location>
        <begin position="24"/>
        <end position="44"/>
    </location>
</feature>
<feature type="short sequence motif" description="Bipartite nuclear localization signal" evidence="1">
    <location>
        <begin position="47"/>
        <end position="65"/>
    </location>
</feature>
<feature type="modified residue" description="Phosphoserine" evidence="4 5">
    <location>
        <position position="87"/>
    </location>
</feature>
<feature type="modified residue" description="Phosphoserine" evidence="5">
    <location>
        <position position="90"/>
    </location>
</feature>
<feature type="modified residue" description="Phosphoserine" evidence="5">
    <location>
        <position position="93"/>
    </location>
</feature>
<feature type="modified residue" description="Phosphoserine" evidence="5">
    <location>
        <position position="101"/>
    </location>
</feature>
<feature type="sequence conflict" description="In Ref. 2; BAB23032." evidence="3" ref="2">
    <original>F</original>
    <variation>L</variation>
    <location>
        <position position="16"/>
    </location>
</feature>
<feature type="sequence conflict" description="In Ref. 2; BAE25233." evidence="3" ref="2">
    <original>P</original>
    <variation>R</variation>
    <location>
        <position position="173"/>
    </location>
</feature>